<keyword id="KW-0002">3D-structure</keyword>
<keyword id="KW-0150">Chloroplast</keyword>
<keyword id="KW-0456">Lyase</keyword>
<keyword id="KW-0460">Magnesium</keyword>
<keyword id="KW-0479">Metal-binding</keyword>
<keyword id="KW-0934">Plastid</keyword>
<keyword id="KW-0809">Transit peptide</keyword>
<name>CINS1_SALFT</name>
<comment type="function">
    <text evidence="6">Monoterpene synthase (TPS) involved in the biosynthesis of monoterpene natural products, components of the chemical defense arsenal (PubMed:17557809). Catalyzes the conversion of (2E)-geranyl diphosphate (GPP) into 1,8-cineole, and, as minor products, alpha-terpineol, beta-pinene, alpha-pinene, sabinene and myrcene (PubMed:17557809).</text>
</comment>
<comment type="catalytic activity">
    <reaction evidence="6">
        <text>(2E)-geranyl diphosphate + H2O = 1,8-cineole + diphosphate</text>
        <dbReference type="Rhea" id="RHEA:32543"/>
        <dbReference type="ChEBI" id="CHEBI:15377"/>
        <dbReference type="ChEBI" id="CHEBI:27961"/>
        <dbReference type="ChEBI" id="CHEBI:33019"/>
        <dbReference type="ChEBI" id="CHEBI:58057"/>
        <dbReference type="EC" id="4.2.3.108"/>
    </reaction>
    <physiologicalReaction direction="left-to-right" evidence="6">
        <dbReference type="Rhea" id="RHEA:32544"/>
    </physiologicalReaction>
</comment>
<comment type="catalytic activity">
    <reaction evidence="6">
        <text>(2E)-geranyl diphosphate = alpha-pinene + diphosphate</text>
        <dbReference type="Rhea" id="RHEA:25662"/>
        <dbReference type="ChEBI" id="CHEBI:33019"/>
        <dbReference type="ChEBI" id="CHEBI:36740"/>
        <dbReference type="ChEBI" id="CHEBI:58057"/>
    </reaction>
    <physiologicalReaction direction="left-to-right" evidence="6">
        <dbReference type="Rhea" id="RHEA:25663"/>
    </physiologicalReaction>
</comment>
<comment type="catalytic activity">
    <reaction evidence="6">
        <text>(2E)-geranyl diphosphate = beta-pinene + diphosphate</text>
        <dbReference type="Rhea" id="RHEA:25666"/>
        <dbReference type="ChEBI" id="CHEBI:33019"/>
        <dbReference type="ChEBI" id="CHEBI:50025"/>
        <dbReference type="ChEBI" id="CHEBI:58057"/>
    </reaction>
    <physiologicalReaction direction="left-to-right" evidence="6">
        <dbReference type="Rhea" id="RHEA:25667"/>
    </physiologicalReaction>
</comment>
<comment type="catalytic activity">
    <reaction evidence="6">
        <text>(2E)-geranyl diphosphate + H2O = (S)-alpha-terpineol + diphosphate</text>
        <dbReference type="Rhea" id="RHEA:32551"/>
        <dbReference type="ChEBI" id="CHEBI:128"/>
        <dbReference type="ChEBI" id="CHEBI:15377"/>
        <dbReference type="ChEBI" id="CHEBI:33019"/>
        <dbReference type="ChEBI" id="CHEBI:58057"/>
        <dbReference type="EC" id="4.2.3.111"/>
    </reaction>
    <physiologicalReaction direction="left-to-right" evidence="6">
        <dbReference type="Rhea" id="RHEA:32552"/>
    </physiologicalReaction>
</comment>
<comment type="catalytic activity">
    <reaction evidence="6">
        <text>(2E)-geranyl diphosphate = beta-myrcene + diphosphate</text>
        <dbReference type="Rhea" id="RHEA:16965"/>
        <dbReference type="ChEBI" id="CHEBI:17221"/>
        <dbReference type="ChEBI" id="CHEBI:33019"/>
        <dbReference type="ChEBI" id="CHEBI:58057"/>
        <dbReference type="EC" id="4.2.3.15"/>
    </reaction>
    <physiologicalReaction direction="left-to-right" evidence="6">
        <dbReference type="Rhea" id="RHEA:16966"/>
    </physiologicalReaction>
</comment>
<comment type="catalytic activity">
    <reaction evidence="6">
        <text>(2E)-geranyl diphosphate = sabinene + diphosphate</text>
        <dbReference type="Rhea" id="RHEA:68636"/>
        <dbReference type="ChEBI" id="CHEBI:33019"/>
        <dbReference type="ChEBI" id="CHEBI:50027"/>
        <dbReference type="ChEBI" id="CHEBI:58057"/>
    </reaction>
    <physiologicalReaction direction="left-to-right" evidence="6">
        <dbReference type="Rhea" id="RHEA:68637"/>
    </physiologicalReaction>
</comment>
<comment type="cofactor">
    <cofactor evidence="1">
        <name>Mg(2+)</name>
        <dbReference type="ChEBI" id="CHEBI:18420"/>
    </cofactor>
    <cofactor evidence="1">
        <name>Mn(2+)</name>
        <dbReference type="ChEBI" id="CHEBI:29035"/>
    </cofactor>
    <text evidence="1">Binds 3 Mg(2+) or Mn(2+) ions per subunit.</text>
</comment>
<comment type="biophysicochemical properties">
    <kinetics>
        <KM evidence="6">65.4 uM for (2E)-geranyl diphosphate</KM>
        <text evidence="6">kcat is 3.18 min(-1) with (2E)-geranyl diphosphate as substrate.</text>
    </kinetics>
</comment>
<comment type="pathway">
    <text evidence="6">Secondary metabolite biosynthesis; terpenoid biosynthesis.</text>
</comment>
<comment type="subunit">
    <text evidence="4">Monomer.</text>
</comment>
<comment type="subcellular location">
    <subcellularLocation>
        <location evidence="5">Plastid</location>
        <location evidence="5">Chloroplast</location>
    </subcellularLocation>
</comment>
<comment type="domain">
    <text evidence="8">The Asp-Asp-Xaa-Xaa-Asp/Glu (DDXXD/E) motif is important for the catalytic activity, presumably through binding to Mg(2+).</text>
</comment>
<comment type="similarity">
    <text evidence="8">Belongs to the terpene synthase family. Tpsb subfamily.</text>
</comment>
<proteinExistence type="evidence at protein level"/>
<gene>
    <name evidence="7" type="primary">CinS1</name>
</gene>
<reference key="1">
    <citation type="journal article" date="2007" name="Plant Cell">
        <title>Rational conversion of substrate and product specificity in a Salvia monoterpene synthase: structural insights into the evolution of terpene synthase function.</title>
        <authorList>
            <person name="Kampranis S.C."/>
            <person name="Ioannidis D."/>
            <person name="Purvis A."/>
            <person name="Mahrez W."/>
            <person name="Ninga E."/>
            <person name="Katerelos N.A."/>
            <person name="Anssour S."/>
            <person name="Dunwell J.M."/>
            <person name="Degenhardt J."/>
            <person name="Makris A.M."/>
            <person name="Goodenough P.W."/>
            <person name="Johnson C.B."/>
        </authorList>
    </citation>
    <scope>X-RAY CRYSTALLOGRAPHY (1.95 ANGSTROMS) OF 25-591</scope>
    <scope>NUCLEOTIDE SEQUENCE [MRNA]</scope>
    <scope>FUNCTION</scope>
    <scope>MUTAGENESIS OF ASN-338; ALA-339; GLY-447; ILE-449 AND PRO-450</scope>
    <scope>CATALYTIC ACTIVITY</scope>
    <scope>PATHWAY</scope>
    <scope>BIOPHYSICOCHEMICAL PROPERTIES</scope>
    <scope>SITE</scope>
</reference>
<evidence type="ECO:0000250" key="1">
    <source>
        <dbReference type="UniProtKB" id="A0A1C9J6A7"/>
    </source>
</evidence>
<evidence type="ECO:0000250" key="2">
    <source>
        <dbReference type="UniProtKB" id="A6XH06"/>
    </source>
</evidence>
<evidence type="ECO:0000250" key="3">
    <source>
        <dbReference type="UniProtKB" id="Q40577"/>
    </source>
</evidence>
<evidence type="ECO:0000250" key="4">
    <source>
        <dbReference type="UniProtKB" id="Q6JD73"/>
    </source>
</evidence>
<evidence type="ECO:0000255" key="5"/>
<evidence type="ECO:0000269" key="6">
    <source>
    </source>
</evidence>
<evidence type="ECO:0000303" key="7">
    <source>
    </source>
</evidence>
<evidence type="ECO:0000305" key="8"/>
<evidence type="ECO:0007829" key="9">
    <source>
        <dbReference type="PDB" id="2J5C"/>
    </source>
</evidence>
<protein>
    <recommendedName>
        <fullName evidence="7">Cineole synthase 1, chloroplastic</fullName>
        <shortName evidence="7">Sf-CinS1</shortName>
        <ecNumber evidence="6">4.2.3.108</ecNumber>
    </recommendedName>
    <alternativeName>
        <fullName evidence="7">Alpha-pinene synthase</fullName>
        <ecNumber evidence="6">4.2.3.-</ecNumber>
    </alternativeName>
    <alternativeName>
        <fullName evidence="7">Alpha-terpineol synthase</fullName>
        <ecNumber evidence="6">4.2.3.111</ecNumber>
    </alternativeName>
    <alternativeName>
        <fullName evidence="7">Beta-pinene synthase</fullName>
        <ecNumber evidence="6">4.2.3.-</ecNumber>
    </alternativeName>
    <alternativeName>
        <fullName evidence="7">Myrcene synthase</fullName>
        <ecNumber evidence="6">4.2.3.15</ecNumber>
    </alternativeName>
    <alternativeName>
        <fullName evidence="7">Sabinene synthase</fullName>
        <ecNumber evidence="6">4.2.3.-</ecNumber>
    </alternativeName>
</protein>
<dbReference type="EC" id="4.2.3.108" evidence="6"/>
<dbReference type="EC" id="4.2.3.-" evidence="6"/>
<dbReference type="EC" id="4.2.3.111" evidence="6"/>
<dbReference type="EC" id="4.2.3.15" evidence="6"/>
<dbReference type="EMBL" id="DQ785793">
    <property type="protein sequence ID" value="ABH07677.1"/>
    <property type="molecule type" value="mRNA"/>
</dbReference>
<dbReference type="PDB" id="2J5C">
    <property type="method" value="X-ray"/>
    <property type="resolution" value="1.95 A"/>
    <property type="chains" value="A/B=25-591"/>
</dbReference>
<dbReference type="PDBsum" id="2J5C"/>
<dbReference type="SMR" id="A6XH05"/>
<dbReference type="BRENDA" id="4.2.3.108">
    <property type="organism ID" value="12982"/>
</dbReference>
<dbReference type="UniPathway" id="UPA00213"/>
<dbReference type="EvolutionaryTrace" id="A6XH05"/>
<dbReference type="GO" id="GO:0009507">
    <property type="term" value="C:chloroplast"/>
    <property type="evidence" value="ECO:0007669"/>
    <property type="project" value="UniProtKB-SubCell"/>
</dbReference>
<dbReference type="GO" id="GO:0102313">
    <property type="term" value="F:1,8-cineole synthase activity"/>
    <property type="evidence" value="ECO:0000314"/>
    <property type="project" value="UniProtKB"/>
</dbReference>
<dbReference type="GO" id="GO:0000287">
    <property type="term" value="F:magnesium ion binding"/>
    <property type="evidence" value="ECO:0007669"/>
    <property type="project" value="InterPro"/>
</dbReference>
<dbReference type="GO" id="GO:0050551">
    <property type="term" value="F:myrcene synthase activity"/>
    <property type="evidence" value="ECO:0000314"/>
    <property type="project" value="UniProtKB"/>
</dbReference>
<dbReference type="GO" id="GO:0050550">
    <property type="term" value="F:pinene synthase activity"/>
    <property type="evidence" value="ECO:0000314"/>
    <property type="project" value="UniProtKB"/>
</dbReference>
<dbReference type="GO" id="GO:0080015">
    <property type="term" value="F:sabinene synthase activity"/>
    <property type="evidence" value="ECO:0000314"/>
    <property type="project" value="UniProtKB"/>
</dbReference>
<dbReference type="GO" id="GO:0046248">
    <property type="term" value="P:alpha-pinene biosynthetic process"/>
    <property type="evidence" value="ECO:0000314"/>
    <property type="project" value="UniProtKB"/>
</dbReference>
<dbReference type="GO" id="GO:0016102">
    <property type="term" value="P:diterpenoid biosynthetic process"/>
    <property type="evidence" value="ECO:0007669"/>
    <property type="project" value="InterPro"/>
</dbReference>
<dbReference type="GO" id="GO:0010597">
    <property type="term" value="P:green leaf volatile biosynthetic process"/>
    <property type="evidence" value="ECO:0000314"/>
    <property type="project" value="UniProtKB"/>
</dbReference>
<dbReference type="GO" id="GO:0016099">
    <property type="term" value="P:monoterpenoid biosynthetic process"/>
    <property type="evidence" value="ECO:0000314"/>
    <property type="project" value="UniProtKB"/>
</dbReference>
<dbReference type="CDD" id="cd00684">
    <property type="entry name" value="Terpene_cyclase_plant_C1"/>
    <property type="match status" value="1"/>
</dbReference>
<dbReference type="FunFam" id="1.10.600.10:FF:000007">
    <property type="entry name" value="Isoprene synthase, chloroplastic"/>
    <property type="match status" value="1"/>
</dbReference>
<dbReference type="FunFam" id="1.50.10.130:FF:000001">
    <property type="entry name" value="Isoprene synthase, chloroplastic"/>
    <property type="match status" value="1"/>
</dbReference>
<dbReference type="Gene3D" id="1.10.600.10">
    <property type="entry name" value="Farnesyl Diphosphate Synthase"/>
    <property type="match status" value="1"/>
</dbReference>
<dbReference type="Gene3D" id="1.50.10.130">
    <property type="entry name" value="Terpene synthase, N-terminal domain"/>
    <property type="match status" value="1"/>
</dbReference>
<dbReference type="InterPro" id="IPR008949">
    <property type="entry name" value="Isoprenoid_synthase_dom_sf"/>
</dbReference>
<dbReference type="InterPro" id="IPR034741">
    <property type="entry name" value="Terpene_cyclase-like_1_C"/>
</dbReference>
<dbReference type="InterPro" id="IPR044814">
    <property type="entry name" value="Terpene_cyclase_plant_C1"/>
</dbReference>
<dbReference type="InterPro" id="IPR001906">
    <property type="entry name" value="Terpene_synth_N"/>
</dbReference>
<dbReference type="InterPro" id="IPR036965">
    <property type="entry name" value="Terpene_synth_N_sf"/>
</dbReference>
<dbReference type="InterPro" id="IPR050148">
    <property type="entry name" value="Terpene_synthase-like"/>
</dbReference>
<dbReference type="InterPro" id="IPR005630">
    <property type="entry name" value="Terpene_synthase_metal-bd"/>
</dbReference>
<dbReference type="InterPro" id="IPR008930">
    <property type="entry name" value="Terpenoid_cyclase/PrenylTrfase"/>
</dbReference>
<dbReference type="PANTHER" id="PTHR31225">
    <property type="entry name" value="OS04G0344100 PROTEIN-RELATED"/>
    <property type="match status" value="1"/>
</dbReference>
<dbReference type="PANTHER" id="PTHR31225:SF9">
    <property type="entry name" value="TERPENE SYNTHASE 10"/>
    <property type="match status" value="1"/>
</dbReference>
<dbReference type="Pfam" id="PF01397">
    <property type="entry name" value="Terpene_synth"/>
    <property type="match status" value="1"/>
</dbReference>
<dbReference type="Pfam" id="PF03936">
    <property type="entry name" value="Terpene_synth_C"/>
    <property type="match status" value="1"/>
</dbReference>
<dbReference type="SFLD" id="SFLDG01019">
    <property type="entry name" value="Terpene_Cyclase_Like_1_C_Termi"/>
    <property type="match status" value="1"/>
</dbReference>
<dbReference type="SFLD" id="SFLDG01604">
    <property type="entry name" value="Terpene_Cyclase_Like_1_C_Termi"/>
    <property type="match status" value="1"/>
</dbReference>
<dbReference type="SFLD" id="SFLDG01014">
    <property type="entry name" value="Terpene_Cyclase_Like_1_N-term"/>
    <property type="match status" value="1"/>
</dbReference>
<dbReference type="SUPFAM" id="SSF48239">
    <property type="entry name" value="Terpenoid cyclases/Protein prenyltransferases"/>
    <property type="match status" value="1"/>
</dbReference>
<dbReference type="SUPFAM" id="SSF48576">
    <property type="entry name" value="Terpenoid synthases"/>
    <property type="match status" value="1"/>
</dbReference>
<organism>
    <name type="scientific">Salvia fruticosa</name>
    <name type="common">Greek sage</name>
    <dbReference type="NCBI Taxonomy" id="268906"/>
    <lineage>
        <taxon>Eukaryota</taxon>
        <taxon>Viridiplantae</taxon>
        <taxon>Streptophyta</taxon>
        <taxon>Embryophyta</taxon>
        <taxon>Tracheophyta</taxon>
        <taxon>Spermatophyta</taxon>
        <taxon>Magnoliopsida</taxon>
        <taxon>eudicotyledons</taxon>
        <taxon>Gunneridae</taxon>
        <taxon>Pentapetalae</taxon>
        <taxon>asterids</taxon>
        <taxon>lamiids</taxon>
        <taxon>Lamiales</taxon>
        <taxon>Lamiaceae</taxon>
        <taxon>Nepetoideae</taxon>
        <taxon>Mentheae</taxon>
        <taxon>Salviinae</taxon>
        <taxon>Salvia</taxon>
        <taxon>Salvia incertae sedis</taxon>
    </lineage>
</organism>
<accession>A6XH05</accession>
<sequence length="591" mass="69613">MSSLIMQVVIPKPAKFFHNNLFSLSSKRHRFSTTTTTRGGRWARCSLQTGNEIQTERRTGGYQPTLWDFSTIQSFDSEYKEEKHLMRAAGMIDQVKMMLQEEVDSIRRLELIDDLRRLGISCHFEREIVEILNSKYYTNNEIDERDLYSTALRFRLLRQYDFSVSQEVFDCFKNAKGTDFKPSLVDDTRGLLQLYEASFLSAQGEETLRLARDFATKFLQKRVLVDKDINLLSSIERALELPTHWRVQMPNARSFIDAYKRRPDMNPTVLELAKLDFNMVQAQFQQELKEASRWWNSTGLVHELPFVRDRIVECYYWTTGVVERRQHGYERIMLTKINALVTTIDDVFDIYGTLEELQLFTTAIQRWDIESMKQLPPYMQICYLALFNFVNEMAYDTLRDKGFDSTPYLRKVWVGLIESYLIEAKWYYKGHKPSLEEYMKNSWISIGGIPILSHLFFRLTDSIEEEAAESMHKYHDIVRASCTILRLADDMGTSLDEVERGDVPKSVQCYMNEKNASEEEAREHVRSLIDQTWKMMNKEMMTSSFSKYFVEVSANLARMAQWIYQHESDGFGMQHSLVNKMLRDLLFHRYE</sequence>
<feature type="transit peptide" description="Chloroplast" evidence="5">
    <location>
        <begin position="1"/>
        <end position="44"/>
    </location>
</feature>
<feature type="chain" id="PRO_0000455078" description="Cineole synthase 1, chloroplastic">
    <location>
        <begin position="45"/>
        <end position="591"/>
    </location>
</feature>
<feature type="short sequence motif" description="DDXXD motif" evidence="2">
    <location>
        <begin position="345"/>
        <end position="349"/>
    </location>
</feature>
<feature type="binding site" evidence="3">
    <location>
        <position position="308"/>
    </location>
    <ligand>
        <name>(2E)-geranyl diphosphate</name>
        <dbReference type="ChEBI" id="CHEBI:58057"/>
    </ligand>
</feature>
<feature type="binding site" evidence="3">
    <location>
        <position position="345"/>
    </location>
    <ligand>
        <name>(2E)-geranyl diphosphate</name>
        <dbReference type="ChEBI" id="CHEBI:58057"/>
    </ligand>
</feature>
<feature type="binding site" evidence="3">
    <location>
        <position position="345"/>
    </location>
    <ligand>
        <name>Mg(2+)</name>
        <dbReference type="ChEBI" id="CHEBI:18420"/>
        <label>1</label>
    </ligand>
</feature>
<feature type="binding site" evidence="3">
    <location>
        <position position="345"/>
    </location>
    <ligand>
        <name>Mg(2+)</name>
        <dbReference type="ChEBI" id="CHEBI:18420"/>
        <label>2</label>
    </ligand>
</feature>
<feature type="binding site" evidence="3">
    <location>
        <position position="349"/>
    </location>
    <ligand>
        <name>(2E)-geranyl diphosphate</name>
        <dbReference type="ChEBI" id="CHEBI:58057"/>
    </ligand>
</feature>
<feature type="binding site" evidence="3">
    <location>
        <position position="349"/>
    </location>
    <ligand>
        <name>Mg(2+)</name>
        <dbReference type="ChEBI" id="CHEBI:18420"/>
        <label>1</label>
    </ligand>
</feature>
<feature type="binding site" evidence="3">
    <location>
        <position position="349"/>
    </location>
    <ligand>
        <name>Mg(2+)</name>
        <dbReference type="ChEBI" id="CHEBI:18420"/>
        <label>2</label>
    </ligand>
</feature>
<feature type="binding site" evidence="3">
    <location>
        <position position="486"/>
    </location>
    <ligand>
        <name>(2E)-geranyl diphosphate</name>
        <dbReference type="ChEBI" id="CHEBI:58057"/>
    </ligand>
</feature>
<feature type="binding site" evidence="3">
    <location>
        <position position="489"/>
    </location>
    <ligand>
        <name>(2E)-geranyl diphosphate</name>
        <dbReference type="ChEBI" id="CHEBI:58057"/>
    </ligand>
</feature>
<feature type="binding site" evidence="3">
    <location>
        <position position="489"/>
    </location>
    <ligand>
        <name>Mg(2+)</name>
        <dbReference type="ChEBI" id="CHEBI:18420"/>
        <label>3</label>
    </ligand>
</feature>
<feature type="binding site" evidence="3">
    <location>
        <position position="493"/>
    </location>
    <ligand>
        <name>Mg(2+)</name>
        <dbReference type="ChEBI" id="CHEBI:18420"/>
        <label>3</label>
    </ligand>
</feature>
<feature type="binding site" evidence="3">
    <location>
        <position position="497"/>
    </location>
    <ligand>
        <name>Mg(2+)</name>
        <dbReference type="ChEBI" id="CHEBI:18420"/>
        <label>3</label>
    </ligand>
</feature>
<feature type="site" description="Confers catalytic properties (activation of water molecule and hydroxylation of the alpha-terpinyl cation)" evidence="6">
    <location>
        <position position="338"/>
    </location>
</feature>
<feature type="mutagenesis site" description="Acquired ability to produce cis-alpha-bergamotene, trans-alpha-bergamotene, Z-beta-farnesene, E-beta-farnesene, beta-selinene, beta-bisabolene and beta-sesquiphellandrene from farnesyl diphosphate (FPP), thus having a sesquiterpene synthase activity." evidence="6">
    <original>N</original>
    <variation>A</variation>
    <variation>C</variation>
    <location>
        <position position="338"/>
    </location>
</feature>
<feature type="mutagenesis site" description="Lost ability to produce 1,8-cineole, beta-pinene and alpha-terpineol, but increased ability to produce sabinene and acquired ability to produce limonene from (2E)-geranyl diphosphate. Lost ability to produce 1,8-cineole, beta-pinene and alpha-terpineol, but strongly increased ability to produce sabinene and acquired ability to produce limonene from (2E)-geranyl diphosphate; when associated with T-339. Lost ability to produce 1,8-cineole, alpha-pinene, beta-pinene and alpha-terpineol, but strongly increased ability to produce sabinene and slightly acquired ability to produce limonene from (2E)-geranyl diphosphate; when associated with T-339, S-447, P-449 and T-450." evidence="6">
    <original>N</original>
    <variation>I</variation>
    <location>
        <position position="338"/>
    </location>
</feature>
<feature type="mutagenesis site" description="Acquired ability to produce E-beta-farnesene, beta-bisabolene and beta-sesquiphellandrene from farnesyl diphosphate (FPP), thus having a sesquiterpene synthase activity." evidence="6">
    <original>N</original>
    <variation>S</variation>
    <location>
        <position position="338"/>
    </location>
</feature>
<feature type="mutagenesis site" description="Lost ability to produce 1,8-cineole, but strongly increased ability to produce sabinene and acquired ability to produce limonene from (2E)-geranyl diphosphate; when associated with I-338. Lost ability to produce 1,8-cineole, alpha-pinene, beta-pinene and alpha-terpineol, but strongly increased ability to produce sabinene and slightly acquired ability to produce limonene from (2E)-geranyl diphosphate; when associated with I-338, S-447, P-449 and T-450." evidence="6">
    <original>A</original>
    <variation>T</variation>
    <location>
        <position position="339"/>
    </location>
</feature>
<feature type="mutagenesis site" description="Lost ability to produce 1,8-cineole, alpha-pinene, beta-pinene and alpha-terpineol, but strongly increased ability to produce sabinene and slightly acquired ability to produce limonene from (2E)-geranyl diphosphate; when associated with I-338, T-339, P-449 and T-450." evidence="6">
    <original>G</original>
    <variation>S</variation>
    <location>
        <position position="447"/>
    </location>
</feature>
<feature type="mutagenesis site" description="Impaired terpene synthase activity; when associated with S-447. Lost ability to produce 1,8-cineole, alpha-pinene, beta-pinene and alpha-terpineol, but strongly increased ability to produce sabinene and slightly acquired ability to produce limonene from (2E)-geranyl diphosphate; when associated with I-338, T-339, S-447 and T-450." evidence="6">
    <original>I</original>
    <variation>P</variation>
    <location>
        <position position="449"/>
    </location>
</feature>
<feature type="mutagenesis site" description="Lost ability to produce 1,8-cineole, alpha-pinene, beta-pinene and alpha-terpineol, but strongly increased ability to produce sabinene and slightly acquired ability to produce limonene from (2E)-geranyl diphosphate; when associated with I-338, T-339, S-447 and P-449." evidence="6">
    <original>P</original>
    <variation>T</variation>
    <location>
        <position position="450"/>
    </location>
</feature>
<feature type="helix" evidence="9">
    <location>
        <begin position="85"/>
        <end position="101"/>
    </location>
</feature>
<feature type="helix" evidence="9">
    <location>
        <begin position="105"/>
        <end position="117"/>
    </location>
</feature>
<feature type="helix" evidence="9">
    <location>
        <begin position="121"/>
        <end position="124"/>
    </location>
</feature>
<feature type="helix" evidence="9">
    <location>
        <begin position="125"/>
        <end position="135"/>
    </location>
</feature>
<feature type="helix" evidence="9">
    <location>
        <begin position="147"/>
        <end position="159"/>
    </location>
</feature>
<feature type="helix" evidence="9">
    <location>
        <begin position="166"/>
        <end position="172"/>
    </location>
</feature>
<feature type="strand" evidence="9">
    <location>
        <begin position="175"/>
        <end position="180"/>
    </location>
</feature>
<feature type="helix" evidence="9">
    <location>
        <begin position="182"/>
        <end position="186"/>
    </location>
</feature>
<feature type="helix" evidence="9">
    <location>
        <begin position="188"/>
        <end position="198"/>
    </location>
</feature>
<feature type="helix" evidence="9">
    <location>
        <begin position="206"/>
        <end position="217"/>
    </location>
</feature>
<feature type="helix" evidence="9">
    <location>
        <begin position="229"/>
        <end position="240"/>
    </location>
</feature>
<feature type="helix" evidence="9">
    <location>
        <begin position="243"/>
        <end position="245"/>
    </location>
</feature>
<feature type="helix" evidence="9">
    <location>
        <begin position="249"/>
        <end position="259"/>
    </location>
</feature>
<feature type="helix" evidence="9">
    <location>
        <begin position="267"/>
        <end position="298"/>
    </location>
</feature>
<feature type="helix" evidence="9">
    <location>
        <begin position="300"/>
        <end position="303"/>
    </location>
</feature>
<feature type="helix" evidence="9">
    <location>
        <begin position="311"/>
        <end position="321"/>
    </location>
</feature>
<feature type="helix" evidence="9">
    <location>
        <begin position="325"/>
        <end position="327"/>
    </location>
</feature>
<feature type="helix" evidence="9">
    <location>
        <begin position="328"/>
        <end position="349"/>
    </location>
</feature>
<feature type="helix" evidence="9">
    <location>
        <begin position="354"/>
        <end position="366"/>
    </location>
</feature>
<feature type="helix" evidence="9">
    <location>
        <begin position="370"/>
        <end position="374"/>
    </location>
</feature>
<feature type="helix" evidence="9">
    <location>
        <begin position="377"/>
        <end position="401"/>
    </location>
</feature>
<feature type="helix" evidence="9">
    <location>
        <begin position="406"/>
        <end position="429"/>
    </location>
</feature>
<feature type="helix" evidence="9">
    <location>
        <begin position="435"/>
        <end position="445"/>
    </location>
</feature>
<feature type="helix" evidence="9">
    <location>
        <begin position="449"/>
        <end position="458"/>
    </location>
</feature>
<feature type="helix" evidence="9">
    <location>
        <begin position="465"/>
        <end position="471"/>
    </location>
</feature>
<feature type="turn" evidence="9">
    <location>
        <begin position="472"/>
        <end position="474"/>
    </location>
</feature>
<feature type="helix" evidence="9">
    <location>
        <begin position="476"/>
        <end position="492"/>
    </location>
</feature>
<feature type="helix" evidence="9">
    <location>
        <begin position="506"/>
        <end position="509"/>
    </location>
</feature>
<feature type="helix" evidence="9">
    <location>
        <begin position="519"/>
        <end position="542"/>
    </location>
</feature>
<feature type="helix" evidence="9">
    <location>
        <begin position="547"/>
        <end position="563"/>
    </location>
</feature>
<feature type="helix" evidence="9">
    <location>
        <begin position="565"/>
        <end position="567"/>
    </location>
</feature>
<feature type="helix" evidence="9">
    <location>
        <begin position="577"/>
        <end position="586"/>
    </location>
</feature>